<feature type="chain" id="PRO_0000087410" description="Glucose-6-phosphatase catalytic subunit 1">
    <location>
        <begin position="1"/>
        <end position="357"/>
    </location>
</feature>
<feature type="topological domain" description="Lumenal" evidence="2">
    <location>
        <begin position="1"/>
        <end position="28"/>
    </location>
</feature>
<feature type="transmembrane region" description="Helical" evidence="3">
    <location>
        <begin position="29"/>
        <end position="49"/>
    </location>
</feature>
<feature type="topological domain" description="Cytoplasmic" evidence="2">
    <location>
        <begin position="50"/>
        <end position="60"/>
    </location>
</feature>
<feature type="transmembrane region" description="Helical" evidence="3">
    <location>
        <begin position="61"/>
        <end position="81"/>
    </location>
</feature>
<feature type="topological domain" description="Lumenal" evidence="2">
    <location>
        <begin position="82"/>
        <end position="117"/>
    </location>
</feature>
<feature type="transmembrane region" description="Helical" evidence="3">
    <location>
        <begin position="118"/>
        <end position="138"/>
    </location>
</feature>
<feature type="topological domain" description="Cytoplasmic" evidence="2">
    <location>
        <begin position="139"/>
        <end position="147"/>
    </location>
</feature>
<feature type="transmembrane region" description="Helical" evidence="3">
    <location>
        <begin position="148"/>
        <end position="168"/>
    </location>
</feature>
<feature type="topological domain" description="Lumenal" evidence="2">
    <location>
        <begin position="169"/>
        <end position="170"/>
    </location>
</feature>
<feature type="transmembrane region" description="Helical" evidence="3">
    <location>
        <begin position="171"/>
        <end position="191"/>
    </location>
</feature>
<feature type="topological domain" description="Cytoplasmic" evidence="2">
    <location>
        <begin position="192"/>
        <end position="209"/>
    </location>
</feature>
<feature type="transmembrane region" description="Helical" evidence="3">
    <location>
        <begin position="210"/>
        <end position="230"/>
    </location>
</feature>
<feature type="topological domain" description="Lumenal" evidence="2">
    <location>
        <begin position="231"/>
        <end position="254"/>
    </location>
</feature>
<feature type="transmembrane region" description="Helical" evidence="3">
    <location>
        <begin position="255"/>
        <end position="275"/>
    </location>
</feature>
<feature type="topological domain" description="Cytoplasmic" evidence="2">
    <location>
        <begin position="276"/>
        <end position="291"/>
    </location>
</feature>
<feature type="transmembrane region" description="Helical" evidence="3">
    <location>
        <begin position="292"/>
        <end position="312"/>
    </location>
</feature>
<feature type="topological domain" description="Lumenal" evidence="2">
    <location>
        <begin position="313"/>
        <end position="320"/>
    </location>
</feature>
<feature type="transmembrane region" description="Helical" evidence="3">
    <location>
        <begin position="321"/>
        <end position="341"/>
    </location>
</feature>
<feature type="topological domain" description="Cytoplasmic" evidence="2">
    <location>
        <begin position="342"/>
        <end position="357"/>
    </location>
</feature>
<feature type="short sequence motif" description="Prevents secretion from ER" evidence="3">
    <location>
        <begin position="354"/>
        <end position="357"/>
    </location>
</feature>
<feature type="active site" description="Proton donor" evidence="3">
    <location>
        <position position="119"/>
    </location>
</feature>
<feature type="active site" description="Nucleophile" evidence="2">
    <location>
        <position position="176"/>
    </location>
</feature>
<feature type="binding site" evidence="3">
    <location>
        <position position="83"/>
    </location>
    <ligand>
        <name>substrate</name>
    </ligand>
</feature>
<feature type="binding site" evidence="3">
    <location>
        <position position="170"/>
    </location>
    <ligand>
        <name>substrate</name>
    </ligand>
</feature>
<feature type="glycosylation site" description="N-linked (GlcNAc...) asparagine" evidence="1">
    <location>
        <position position="96"/>
    </location>
</feature>
<feature type="sequence variant" description="In GSD-Ia." evidence="4">
    <original>M</original>
    <variation>I</variation>
    <location>
        <position position="121"/>
    </location>
</feature>
<reference key="1">
    <citation type="journal article" date="1997" name="Biochem. Mol. Med.">
        <title>Isolation and nucleotide sequence of canine glucose-6-phosphatase mRNA: identification of mutation in puppies with glycogen storage disease type Ia.</title>
        <authorList>
            <person name="Kishnani P.S."/>
            <person name="Bao Y."/>
            <person name="Wu J.Y."/>
            <person name="Brix A.E."/>
            <person name="Lin J.L."/>
            <person name="Chen Y.T."/>
        </authorList>
    </citation>
    <scope>NUCLEOTIDE SEQUENCE [MRNA]</scope>
    <scope>VARIANT GSD-IA ILE-121</scope>
    <scope>INVOLVEMENT IN GSD-IA</scope>
    <source>
        <strain>Maltese</strain>
    </source>
</reference>
<protein>
    <recommendedName>
        <fullName>Glucose-6-phosphatase catalytic subunit 1</fullName>
        <ecNumber evidence="2">3.1.3.9</ecNumber>
    </recommendedName>
    <alternativeName>
        <fullName>Glucose-6-phosphatase</fullName>
        <shortName>G-6-Pase</shortName>
        <shortName>G6Pase</shortName>
    </alternativeName>
</protein>
<organism>
    <name type="scientific">Canis lupus familiaris</name>
    <name type="common">Dog</name>
    <name type="synonym">Canis familiaris</name>
    <dbReference type="NCBI Taxonomy" id="9615"/>
    <lineage>
        <taxon>Eukaryota</taxon>
        <taxon>Metazoa</taxon>
        <taxon>Chordata</taxon>
        <taxon>Craniata</taxon>
        <taxon>Vertebrata</taxon>
        <taxon>Euteleostomi</taxon>
        <taxon>Mammalia</taxon>
        <taxon>Eutheria</taxon>
        <taxon>Laurasiatheria</taxon>
        <taxon>Carnivora</taxon>
        <taxon>Caniformia</taxon>
        <taxon>Canidae</taxon>
        <taxon>Canis</taxon>
    </lineage>
</organism>
<evidence type="ECO:0000250" key="1"/>
<evidence type="ECO:0000250" key="2">
    <source>
        <dbReference type="UniProtKB" id="P35575"/>
    </source>
</evidence>
<evidence type="ECO:0000255" key="3"/>
<evidence type="ECO:0000269" key="4">
    <source>
    </source>
</evidence>
<evidence type="ECO:0000305" key="5"/>
<gene>
    <name type="primary">G6PC1</name>
    <name type="synonym">G6PC</name>
    <name type="synonym">G6PT</name>
</gene>
<dbReference type="EC" id="3.1.3.9" evidence="2"/>
<dbReference type="EMBL" id="U91844">
    <property type="protein sequence ID" value="AAB65147.1"/>
    <property type="molecule type" value="mRNA"/>
</dbReference>
<dbReference type="FunCoup" id="O19133">
    <property type="interactions" value="2"/>
</dbReference>
<dbReference type="STRING" id="9615.ENSCAFP00000021606"/>
<dbReference type="GlyCosmos" id="O19133">
    <property type="glycosylation" value="1 site, No reported glycans"/>
</dbReference>
<dbReference type="PaxDb" id="9612-ENSCAFP00000021606"/>
<dbReference type="eggNOG" id="ENOG502QS9B">
    <property type="taxonomic scope" value="Eukaryota"/>
</dbReference>
<dbReference type="InParanoid" id="O19133"/>
<dbReference type="UniPathway" id="UPA00138"/>
<dbReference type="Proteomes" id="UP000002254">
    <property type="component" value="Unplaced"/>
</dbReference>
<dbReference type="Proteomes" id="UP000694429">
    <property type="component" value="Unplaced"/>
</dbReference>
<dbReference type="Proteomes" id="UP000694542">
    <property type="component" value="Unplaced"/>
</dbReference>
<dbReference type="Proteomes" id="UP000805418">
    <property type="component" value="Unplaced"/>
</dbReference>
<dbReference type="GO" id="GO:0005789">
    <property type="term" value="C:endoplasmic reticulum membrane"/>
    <property type="evidence" value="ECO:0007669"/>
    <property type="project" value="UniProtKB-SubCell"/>
</dbReference>
<dbReference type="GO" id="GO:0016020">
    <property type="term" value="C:membrane"/>
    <property type="evidence" value="ECO:0000318"/>
    <property type="project" value="GO_Central"/>
</dbReference>
<dbReference type="GO" id="GO:0004346">
    <property type="term" value="F:glucose-6-phosphatase activity"/>
    <property type="evidence" value="ECO:0000318"/>
    <property type="project" value="GO_Central"/>
</dbReference>
<dbReference type="GO" id="GO:0006094">
    <property type="term" value="P:gluconeogenesis"/>
    <property type="evidence" value="ECO:0000318"/>
    <property type="project" value="GO_Central"/>
</dbReference>
<dbReference type="GO" id="GO:0051156">
    <property type="term" value="P:glucose 6-phosphate metabolic process"/>
    <property type="evidence" value="ECO:0000318"/>
    <property type="project" value="GO_Central"/>
</dbReference>
<dbReference type="CDD" id="cd03381">
    <property type="entry name" value="PAP2_glucose_6_phosphatase"/>
    <property type="match status" value="1"/>
</dbReference>
<dbReference type="FunFam" id="1.20.144.10:FF:000010">
    <property type="entry name" value="Glucose-6-phosphatase"/>
    <property type="match status" value="1"/>
</dbReference>
<dbReference type="Gene3D" id="1.20.144.10">
    <property type="entry name" value="Phosphatidic acid phosphatase type 2/haloperoxidase"/>
    <property type="match status" value="1"/>
</dbReference>
<dbReference type="InterPro" id="IPR016275">
    <property type="entry name" value="Glucose-6-phosphatase"/>
</dbReference>
<dbReference type="InterPro" id="IPR036938">
    <property type="entry name" value="P_Acid_Pase_2/haloperoxi_sf"/>
</dbReference>
<dbReference type="InterPro" id="IPR000326">
    <property type="entry name" value="P_Acid_Pase_2/haloperoxidase"/>
</dbReference>
<dbReference type="PANTHER" id="PTHR12591">
    <property type="entry name" value="GLUCOSE-6-PHOSPHATASE"/>
    <property type="match status" value="1"/>
</dbReference>
<dbReference type="PANTHER" id="PTHR12591:SF3">
    <property type="entry name" value="GLUCOSE-6-PHOSPHATASE CATALYTIC SUBUNIT 1"/>
    <property type="match status" value="1"/>
</dbReference>
<dbReference type="Pfam" id="PF01569">
    <property type="entry name" value="PAP2"/>
    <property type="match status" value="1"/>
</dbReference>
<dbReference type="PIRSF" id="PIRSF000905">
    <property type="entry name" value="Glucose-6-phosphatase"/>
    <property type="match status" value="1"/>
</dbReference>
<dbReference type="SMART" id="SM00014">
    <property type="entry name" value="acidPPc"/>
    <property type="match status" value="1"/>
</dbReference>
<dbReference type="SUPFAM" id="SSF48317">
    <property type="entry name" value="Acid phosphatase/Vanadium-dependent haloperoxidase"/>
    <property type="match status" value="1"/>
</dbReference>
<name>G6PC1_CANLF</name>
<proteinExistence type="evidence at protein level"/>
<comment type="function">
    <text evidence="2">Hydrolyzes glucose-6-phosphate to glucose in the endoplasmic reticulum. Forms with the glucose-6-phosphate transporter (SLC37A4/G6PT) the complex responsible for glucose production in the terminal step of glycogenolysis and gluconeogenesis. Hence, it is the key enzyme in homeostatic regulation of blood glucose levels.</text>
</comment>
<comment type="catalytic activity">
    <reaction evidence="2">
        <text>D-glucose 6-phosphate + H2O = D-glucose + phosphate</text>
        <dbReference type="Rhea" id="RHEA:16689"/>
        <dbReference type="ChEBI" id="CHEBI:4167"/>
        <dbReference type="ChEBI" id="CHEBI:15377"/>
        <dbReference type="ChEBI" id="CHEBI:43474"/>
        <dbReference type="ChEBI" id="CHEBI:61548"/>
        <dbReference type="EC" id="3.1.3.9"/>
    </reaction>
</comment>
<comment type="pathway">
    <text evidence="2">Carbohydrate biosynthesis; gluconeogenesis.</text>
</comment>
<comment type="subcellular location">
    <subcellularLocation>
        <location evidence="2">Endoplasmic reticulum membrane</location>
        <topology evidence="3">Multi-pass membrane protein</topology>
    </subcellularLocation>
</comment>
<comment type="disease">
    <text evidence="4">Defects in G6PC1 are the cause of glycogen storage disease Ia (GSD-Ia); also known as von Gierke disease. GSD-Ia is characterized by hypoglycemia and hepatomegaly.</text>
</comment>
<comment type="similarity">
    <text evidence="5">Belongs to the glucose-6-phosphatase family.</text>
</comment>
<keyword id="KW-0225">Disease variant</keyword>
<keyword id="KW-0256">Endoplasmic reticulum</keyword>
<keyword id="KW-0312">Gluconeogenesis</keyword>
<keyword id="KW-0325">Glycoprotein</keyword>
<keyword id="KW-0378">Hydrolase</keyword>
<keyword id="KW-0472">Membrane</keyword>
<keyword id="KW-1185">Reference proteome</keyword>
<keyword id="KW-0812">Transmembrane</keyword>
<keyword id="KW-1133">Transmembrane helix</keyword>
<accession>O19133</accession>
<sequence length="357" mass="40969">MEKGMDVLHDFGIQSTHYLQVNYQDSQDWFILVSVIADLRNAFYVLFPIWFHLREAVGIKLLWVAVIGDWLNLVFKWILFGQRPYWWVMDTDYYSNTSVPLIKQFPVTCETGPGSPSGHAMGTAGVYYVMVTSTLSIFRGRKRPTYRFRCLNILLWLGFWAVQLNVCLSRIYLAAHFPHQVVAGVLSGIAVAETFRHIQSIYNASLKKYFLITFFLFSFAIGFYLLLKGLGVDLLWTLEKARRWCERPEWVHIDTTPFASLLKNVGTLFGLGVTLNSSMYRESCKGKLSKWFPFRLSCIVVSLILLHLFDSLKPPSQTELIFYTLSFCKSAAVPLASVSLIPYCLARVFDQPDKKSL</sequence>